<keyword id="KW-0378">Hydrolase</keyword>
<keyword id="KW-0479">Metal-binding</keyword>
<keyword id="KW-1185">Reference proteome</keyword>
<keyword id="KW-0862">Zinc</keyword>
<organism>
    <name type="scientific">Methanothermobacter thermautotrophicus (strain ATCC 29096 / DSM 1053 / JCM 10044 / NBRC 100330 / Delta H)</name>
    <name type="common">Methanobacterium thermoautotrophicum</name>
    <dbReference type="NCBI Taxonomy" id="187420"/>
    <lineage>
        <taxon>Archaea</taxon>
        <taxon>Methanobacteriati</taxon>
        <taxon>Methanobacteriota</taxon>
        <taxon>Methanomada group</taxon>
        <taxon>Methanobacteria</taxon>
        <taxon>Methanobacteriales</taxon>
        <taxon>Methanobacteriaceae</taxon>
        <taxon>Methanothermobacter</taxon>
    </lineage>
</organism>
<evidence type="ECO:0000250" key="1">
    <source>
        <dbReference type="UniProtKB" id="Q48935"/>
    </source>
</evidence>
<evidence type="ECO:0000305" key="2"/>
<reference key="1">
    <citation type="journal article" date="1997" name="J. Bacteriol.">
        <title>Complete genome sequence of Methanobacterium thermoautotrophicum deltaH: functional analysis and comparative genomics.</title>
        <authorList>
            <person name="Smith D.R."/>
            <person name="Doucette-Stamm L.A."/>
            <person name="Deloughery C."/>
            <person name="Lee H.-M."/>
            <person name="Dubois J."/>
            <person name="Aldredge T."/>
            <person name="Bashirzadeh R."/>
            <person name="Blakely D."/>
            <person name="Cook R."/>
            <person name="Gilbert K."/>
            <person name="Harrison D."/>
            <person name="Hoang L."/>
            <person name="Keagle P."/>
            <person name="Lumm W."/>
            <person name="Pothier B."/>
            <person name="Qiu D."/>
            <person name="Spadafora R."/>
            <person name="Vicare R."/>
            <person name="Wang Y."/>
            <person name="Wierzbowski J."/>
            <person name="Gibson R."/>
            <person name="Jiwani N."/>
            <person name="Caruso A."/>
            <person name="Bush D."/>
            <person name="Safer H."/>
            <person name="Patwell D."/>
            <person name="Prabhakar S."/>
            <person name="McDougall S."/>
            <person name="Shimer G."/>
            <person name="Goyal A."/>
            <person name="Pietrovski S."/>
            <person name="Church G.M."/>
            <person name="Daniels C.J."/>
            <person name="Mao J.-I."/>
            <person name="Rice P."/>
            <person name="Noelling J."/>
            <person name="Reeve J.N."/>
        </authorList>
    </citation>
    <scope>NUCLEOTIDE SEQUENCE [LARGE SCALE GENOMIC DNA]</scope>
    <source>
        <strain>ATCC 29096 / DSM 1053 / JCM 10044 / NBRC 100330 / Delta H</strain>
    </source>
</reference>
<protein>
    <recommendedName>
        <fullName evidence="2">Probable deacetylase MTH_1194</fullName>
        <ecNumber evidence="1">3.5.1.-</ecNumber>
    </recommendedName>
</protein>
<comment type="function">
    <text evidence="1">Probable deacetylase.</text>
</comment>
<comment type="cofactor">
    <cofactor evidence="1">
        <name>Zn(2+)</name>
        <dbReference type="ChEBI" id="CHEBI:29105"/>
    </cofactor>
    <text evidence="1">Binds 1 zinc ion per subunit.</text>
</comment>
<comment type="similarity">
    <text evidence="2">Belongs to the histone deacetylase family.</text>
</comment>
<dbReference type="EC" id="3.5.1.-" evidence="1"/>
<dbReference type="EMBL" id="AE000666">
    <property type="protein sequence ID" value="AAB85683.1"/>
    <property type="molecule type" value="Genomic_DNA"/>
</dbReference>
<dbReference type="PIR" id="C69026">
    <property type="entry name" value="C69026"/>
</dbReference>
<dbReference type="RefSeq" id="WP_010876818.1">
    <property type="nucleotide sequence ID" value="NC_000916.1"/>
</dbReference>
<dbReference type="SMR" id="O27262"/>
<dbReference type="FunCoup" id="O27262">
    <property type="interactions" value="86"/>
</dbReference>
<dbReference type="STRING" id="187420.MTH_1194"/>
<dbReference type="PaxDb" id="187420-MTH_1194"/>
<dbReference type="EnsemblBacteria" id="AAB85683">
    <property type="protein sequence ID" value="AAB85683"/>
    <property type="gene ID" value="MTH_1194"/>
</dbReference>
<dbReference type="GeneID" id="1471602"/>
<dbReference type="KEGG" id="mth:MTH_1194"/>
<dbReference type="PATRIC" id="fig|187420.15.peg.1172"/>
<dbReference type="HOGENOM" id="CLU_007727_8_0_2"/>
<dbReference type="InParanoid" id="O27262"/>
<dbReference type="Proteomes" id="UP000005223">
    <property type="component" value="Chromosome"/>
</dbReference>
<dbReference type="GO" id="GO:0004407">
    <property type="term" value="F:histone deacetylase activity"/>
    <property type="evidence" value="ECO:0007669"/>
    <property type="project" value="TreeGrafter"/>
</dbReference>
<dbReference type="GO" id="GO:0016787">
    <property type="term" value="F:hydrolase activity"/>
    <property type="evidence" value="ECO:0007669"/>
    <property type="project" value="UniProtKB-KW"/>
</dbReference>
<dbReference type="GO" id="GO:0046872">
    <property type="term" value="F:metal ion binding"/>
    <property type="evidence" value="ECO:0007669"/>
    <property type="project" value="UniProtKB-KW"/>
</dbReference>
<dbReference type="GO" id="GO:0040029">
    <property type="term" value="P:epigenetic regulation of gene expression"/>
    <property type="evidence" value="ECO:0007669"/>
    <property type="project" value="TreeGrafter"/>
</dbReference>
<dbReference type="CDD" id="cd10001">
    <property type="entry name" value="HDAC_classII_APAH"/>
    <property type="match status" value="1"/>
</dbReference>
<dbReference type="Gene3D" id="3.40.800.20">
    <property type="entry name" value="Histone deacetylase domain"/>
    <property type="match status" value="1"/>
</dbReference>
<dbReference type="InterPro" id="IPR050284">
    <property type="entry name" value="HDAC_PDAC"/>
</dbReference>
<dbReference type="InterPro" id="IPR000286">
    <property type="entry name" value="His_deacetylse"/>
</dbReference>
<dbReference type="InterPro" id="IPR023801">
    <property type="entry name" value="His_deacetylse_dom"/>
</dbReference>
<dbReference type="InterPro" id="IPR037138">
    <property type="entry name" value="His_deacetylse_dom_sf"/>
</dbReference>
<dbReference type="InterPro" id="IPR023696">
    <property type="entry name" value="Ureohydrolase_dom_sf"/>
</dbReference>
<dbReference type="PANTHER" id="PTHR10625:SF10">
    <property type="entry name" value="HISTONE DEACETYLASE HDAC1"/>
    <property type="match status" value="1"/>
</dbReference>
<dbReference type="PANTHER" id="PTHR10625">
    <property type="entry name" value="HISTONE DEACETYLASE HDAC1-RELATED"/>
    <property type="match status" value="1"/>
</dbReference>
<dbReference type="Pfam" id="PF00850">
    <property type="entry name" value="Hist_deacetyl"/>
    <property type="match status" value="1"/>
</dbReference>
<dbReference type="PRINTS" id="PR01270">
    <property type="entry name" value="HDASUPER"/>
</dbReference>
<dbReference type="SUPFAM" id="SSF52768">
    <property type="entry name" value="Arginase/deacetylase"/>
    <property type="match status" value="1"/>
</dbReference>
<sequence length="331" mass="36722">MVIIHSPSYDLHNHEGHVENSGRTRAILRAIESSDLSPRFVEPGMAGIDDILMVHSSTHVEYLEVFAGRGGGWLDYDTYMTPESFSVARLSAGGAMLAAEEALRDGWSYSLGRPPGHHATYDRSMGFCIFNNIAIAIEHARRNLGVSRPLVLDFDVHHGNGTSSIFYRDRDVMYISIHQDPRTLFPGTGFIDETGSGEGEGFNLNIPMPRGSGNREYLWILGMILPAVLEGFRPDMIFVSAGFDAHRRDPLAEIMVDEEFFSWIGWFIHQTGLPCTAVLEGGYDPEALGRSNIAFMRGLDGEEYEPETAAPGGVSEIFSQLSDRFSAYFNF</sequence>
<gene>
    <name type="ordered locus">MTH_1194</name>
</gene>
<accession>O27262</accession>
<name>Y1194_METTH</name>
<proteinExistence type="inferred from homology"/>
<feature type="chain" id="PRO_0000114746" description="Probable deacetylase MTH_1194">
    <location>
        <begin position="1"/>
        <end position="331"/>
    </location>
</feature>
<feature type="active site" description="Proton donor/acceptor" evidence="1">
    <location>
        <position position="118"/>
    </location>
</feature>
<feature type="binding site" evidence="1">
    <location>
        <position position="155"/>
    </location>
    <ligand>
        <name>Zn(2+)</name>
        <dbReference type="ChEBI" id="CHEBI:29105"/>
    </ligand>
</feature>
<feature type="binding site" evidence="1">
    <location>
        <position position="157"/>
    </location>
    <ligand>
        <name>Zn(2+)</name>
        <dbReference type="ChEBI" id="CHEBI:29105"/>
    </ligand>
</feature>
<feature type="binding site" evidence="1">
    <location>
        <position position="244"/>
    </location>
    <ligand>
        <name>Zn(2+)</name>
        <dbReference type="ChEBI" id="CHEBI:29105"/>
    </ligand>
</feature>
<feature type="site" description="Polarizes the scissile carbonyl of the substrate" evidence="1">
    <location>
        <position position="283"/>
    </location>
</feature>